<accession>Q5HHQ0</accession>
<sequence length="195" mass="21514">MNLIPTVIETTNRGERAYDIYSRLLKDRIIMLGSQIDDNVANSIVSQLLFLQAQDSEKDIYLYINSPGGSVTAGFAIYDTIQHIKPDVQTICIGMAASMGSFLLAAGAKGKRFALPNAEVMIHQPLGGAQGQATEIEIAANHILKTREKLNRILSERTGQSIEKIQKDTDRDNFLTAEEAKEYGLIDEVMVPETK</sequence>
<evidence type="ECO:0000255" key="1">
    <source>
        <dbReference type="HAMAP-Rule" id="MF_00444"/>
    </source>
</evidence>
<comment type="function">
    <text evidence="1">Cleaves peptides in various proteins in a process that requires ATP hydrolysis. Has a chymotrypsin-like activity. Plays a major role in the degradation of misfolded proteins.</text>
</comment>
<comment type="catalytic activity">
    <reaction evidence="1">
        <text>Hydrolysis of proteins to small peptides in the presence of ATP and magnesium. alpha-casein is the usual test substrate. In the absence of ATP, only oligopeptides shorter than five residues are hydrolyzed (such as succinyl-Leu-Tyr-|-NHMec, and Leu-Tyr-Leu-|-Tyr-Trp, in which cleavage of the -Tyr-|-Leu- and -Tyr-|-Trp bonds also occurs).</text>
        <dbReference type="EC" id="3.4.21.92"/>
    </reaction>
</comment>
<comment type="subunit">
    <text evidence="1">Fourteen ClpP subunits assemble into 2 heptameric rings which stack back to back to give a disk-like structure with a central cavity, resembling the structure of eukaryotic proteasomes.</text>
</comment>
<comment type="subcellular location">
    <subcellularLocation>
        <location evidence="1">Cytoplasm</location>
    </subcellularLocation>
</comment>
<comment type="similarity">
    <text evidence="1">Belongs to the peptidase S14 family.</text>
</comment>
<feature type="chain" id="PRO_0000179649" description="ATP-dependent Clp protease proteolytic subunit">
    <location>
        <begin position="1"/>
        <end position="195"/>
    </location>
</feature>
<feature type="active site" description="Nucleophile" evidence="1">
    <location>
        <position position="98"/>
    </location>
</feature>
<feature type="active site" evidence="1">
    <location>
        <position position="123"/>
    </location>
</feature>
<name>CLPP_STAAC</name>
<keyword id="KW-0963">Cytoplasm</keyword>
<keyword id="KW-0378">Hydrolase</keyword>
<keyword id="KW-0645">Protease</keyword>
<keyword id="KW-0720">Serine protease</keyword>
<gene>
    <name evidence="1" type="primary">clpP</name>
    <name type="ordered locus">SACOL0833</name>
</gene>
<reference key="1">
    <citation type="journal article" date="2005" name="J. Bacteriol.">
        <title>Insights on evolution of virulence and resistance from the complete genome analysis of an early methicillin-resistant Staphylococcus aureus strain and a biofilm-producing methicillin-resistant Staphylococcus epidermidis strain.</title>
        <authorList>
            <person name="Gill S.R."/>
            <person name="Fouts D.E."/>
            <person name="Archer G.L."/>
            <person name="Mongodin E.F."/>
            <person name="DeBoy R.T."/>
            <person name="Ravel J."/>
            <person name="Paulsen I.T."/>
            <person name="Kolonay J.F."/>
            <person name="Brinkac L.M."/>
            <person name="Beanan M.J."/>
            <person name="Dodson R.J."/>
            <person name="Daugherty S.C."/>
            <person name="Madupu R."/>
            <person name="Angiuoli S.V."/>
            <person name="Durkin A.S."/>
            <person name="Haft D.H."/>
            <person name="Vamathevan J.J."/>
            <person name="Khouri H."/>
            <person name="Utterback T.R."/>
            <person name="Lee C."/>
            <person name="Dimitrov G."/>
            <person name="Jiang L."/>
            <person name="Qin H."/>
            <person name="Weidman J."/>
            <person name="Tran K."/>
            <person name="Kang K.H."/>
            <person name="Hance I.R."/>
            <person name="Nelson K.E."/>
            <person name="Fraser C.M."/>
        </authorList>
    </citation>
    <scope>NUCLEOTIDE SEQUENCE [LARGE SCALE GENOMIC DNA]</scope>
    <source>
        <strain>COL</strain>
    </source>
</reference>
<organism>
    <name type="scientific">Staphylococcus aureus (strain COL)</name>
    <dbReference type="NCBI Taxonomy" id="93062"/>
    <lineage>
        <taxon>Bacteria</taxon>
        <taxon>Bacillati</taxon>
        <taxon>Bacillota</taxon>
        <taxon>Bacilli</taxon>
        <taxon>Bacillales</taxon>
        <taxon>Staphylococcaceae</taxon>
        <taxon>Staphylococcus</taxon>
    </lineage>
</organism>
<protein>
    <recommendedName>
        <fullName evidence="1">ATP-dependent Clp protease proteolytic subunit</fullName>
        <ecNumber evidence="1">3.4.21.92</ecNumber>
    </recommendedName>
    <alternativeName>
        <fullName evidence="1">Endopeptidase Clp</fullName>
    </alternativeName>
</protein>
<proteinExistence type="inferred from homology"/>
<dbReference type="EC" id="3.4.21.92" evidence="1"/>
<dbReference type="EMBL" id="CP000046">
    <property type="protein sequence ID" value="AAW36389.1"/>
    <property type="molecule type" value="Genomic_DNA"/>
</dbReference>
<dbReference type="RefSeq" id="WP_001049165.1">
    <property type="nucleotide sequence ID" value="NZ_JBGOFO010000005.1"/>
</dbReference>
<dbReference type="SMR" id="Q5HHQ0"/>
<dbReference type="MEROPS" id="S14.001"/>
<dbReference type="GeneID" id="98345115"/>
<dbReference type="KEGG" id="sac:SACOL0833"/>
<dbReference type="HOGENOM" id="CLU_058707_3_2_9"/>
<dbReference type="Proteomes" id="UP000000530">
    <property type="component" value="Chromosome"/>
</dbReference>
<dbReference type="GO" id="GO:0005737">
    <property type="term" value="C:cytoplasm"/>
    <property type="evidence" value="ECO:0007669"/>
    <property type="project" value="UniProtKB-SubCell"/>
</dbReference>
<dbReference type="GO" id="GO:0009368">
    <property type="term" value="C:endopeptidase Clp complex"/>
    <property type="evidence" value="ECO:0007669"/>
    <property type="project" value="TreeGrafter"/>
</dbReference>
<dbReference type="GO" id="GO:0004176">
    <property type="term" value="F:ATP-dependent peptidase activity"/>
    <property type="evidence" value="ECO:0007669"/>
    <property type="project" value="InterPro"/>
</dbReference>
<dbReference type="GO" id="GO:0051117">
    <property type="term" value="F:ATPase binding"/>
    <property type="evidence" value="ECO:0007669"/>
    <property type="project" value="TreeGrafter"/>
</dbReference>
<dbReference type="GO" id="GO:0004252">
    <property type="term" value="F:serine-type endopeptidase activity"/>
    <property type="evidence" value="ECO:0007669"/>
    <property type="project" value="UniProtKB-UniRule"/>
</dbReference>
<dbReference type="GO" id="GO:0006515">
    <property type="term" value="P:protein quality control for misfolded or incompletely synthesized proteins"/>
    <property type="evidence" value="ECO:0007669"/>
    <property type="project" value="TreeGrafter"/>
</dbReference>
<dbReference type="CDD" id="cd07017">
    <property type="entry name" value="S14_ClpP_2"/>
    <property type="match status" value="1"/>
</dbReference>
<dbReference type="FunFam" id="3.90.226.10:FF:000001">
    <property type="entry name" value="ATP-dependent Clp protease proteolytic subunit"/>
    <property type="match status" value="1"/>
</dbReference>
<dbReference type="Gene3D" id="3.90.226.10">
    <property type="entry name" value="2-enoyl-CoA Hydratase, Chain A, domain 1"/>
    <property type="match status" value="1"/>
</dbReference>
<dbReference type="HAMAP" id="MF_00444">
    <property type="entry name" value="ClpP"/>
    <property type="match status" value="1"/>
</dbReference>
<dbReference type="InterPro" id="IPR001907">
    <property type="entry name" value="ClpP"/>
</dbReference>
<dbReference type="InterPro" id="IPR029045">
    <property type="entry name" value="ClpP/crotonase-like_dom_sf"/>
</dbReference>
<dbReference type="InterPro" id="IPR023562">
    <property type="entry name" value="ClpP/TepA"/>
</dbReference>
<dbReference type="InterPro" id="IPR033135">
    <property type="entry name" value="ClpP_His_AS"/>
</dbReference>
<dbReference type="InterPro" id="IPR018215">
    <property type="entry name" value="ClpP_Ser_AS"/>
</dbReference>
<dbReference type="NCBIfam" id="TIGR00493">
    <property type="entry name" value="clpP"/>
    <property type="match status" value="1"/>
</dbReference>
<dbReference type="NCBIfam" id="NF001368">
    <property type="entry name" value="PRK00277.1"/>
    <property type="match status" value="1"/>
</dbReference>
<dbReference type="NCBIfam" id="NF009205">
    <property type="entry name" value="PRK12553.1"/>
    <property type="match status" value="1"/>
</dbReference>
<dbReference type="PANTHER" id="PTHR10381">
    <property type="entry name" value="ATP-DEPENDENT CLP PROTEASE PROTEOLYTIC SUBUNIT"/>
    <property type="match status" value="1"/>
</dbReference>
<dbReference type="PANTHER" id="PTHR10381:SF70">
    <property type="entry name" value="ATP-DEPENDENT CLP PROTEASE PROTEOLYTIC SUBUNIT"/>
    <property type="match status" value="1"/>
</dbReference>
<dbReference type="Pfam" id="PF00574">
    <property type="entry name" value="CLP_protease"/>
    <property type="match status" value="1"/>
</dbReference>
<dbReference type="PRINTS" id="PR00127">
    <property type="entry name" value="CLPPROTEASEP"/>
</dbReference>
<dbReference type="SUPFAM" id="SSF52096">
    <property type="entry name" value="ClpP/crotonase"/>
    <property type="match status" value="1"/>
</dbReference>
<dbReference type="PROSITE" id="PS00382">
    <property type="entry name" value="CLP_PROTEASE_HIS"/>
    <property type="match status" value="1"/>
</dbReference>
<dbReference type="PROSITE" id="PS00381">
    <property type="entry name" value="CLP_PROTEASE_SER"/>
    <property type="match status" value="1"/>
</dbReference>